<name>CUED1_MOUSE</name>
<accession>Q8R3V6</accession>
<accession>Q5SXC2</accession>
<evidence type="ECO:0000255" key="1">
    <source>
        <dbReference type="PROSITE-ProRule" id="PRU00468"/>
    </source>
</evidence>
<evidence type="ECO:0000256" key="2">
    <source>
        <dbReference type="SAM" id="MobiDB-lite"/>
    </source>
</evidence>
<evidence type="ECO:0000305" key="3"/>
<keyword id="KW-1185">Reference proteome</keyword>
<organism>
    <name type="scientific">Mus musculus</name>
    <name type="common">Mouse</name>
    <dbReference type="NCBI Taxonomy" id="10090"/>
    <lineage>
        <taxon>Eukaryota</taxon>
        <taxon>Metazoa</taxon>
        <taxon>Chordata</taxon>
        <taxon>Craniata</taxon>
        <taxon>Vertebrata</taxon>
        <taxon>Euteleostomi</taxon>
        <taxon>Mammalia</taxon>
        <taxon>Eutheria</taxon>
        <taxon>Euarchontoglires</taxon>
        <taxon>Glires</taxon>
        <taxon>Rodentia</taxon>
        <taxon>Myomorpha</taxon>
        <taxon>Muroidea</taxon>
        <taxon>Muridae</taxon>
        <taxon>Murinae</taxon>
        <taxon>Mus</taxon>
        <taxon>Mus</taxon>
    </lineage>
</organism>
<feature type="chain" id="PRO_0000079560" description="CUE domain-containing protein 1">
    <location>
        <begin position="1"/>
        <end position="388"/>
    </location>
</feature>
<feature type="domain" description="CUE" evidence="1">
    <location>
        <begin position="50"/>
        <end position="93"/>
    </location>
</feature>
<feature type="region of interest" description="Disordered" evidence="2">
    <location>
        <begin position="1"/>
        <end position="45"/>
    </location>
</feature>
<feature type="region of interest" description="Disordered" evidence="2">
    <location>
        <begin position="152"/>
        <end position="178"/>
    </location>
</feature>
<feature type="region of interest" description="Disordered" evidence="2">
    <location>
        <begin position="196"/>
        <end position="225"/>
    </location>
</feature>
<feature type="region of interest" description="Disordered" evidence="2">
    <location>
        <begin position="270"/>
        <end position="302"/>
    </location>
</feature>
<feature type="region of interest" description="Disordered" evidence="2">
    <location>
        <begin position="369"/>
        <end position="388"/>
    </location>
</feature>
<feature type="compositionally biased region" description="Low complexity" evidence="2">
    <location>
        <begin position="1"/>
        <end position="10"/>
    </location>
</feature>
<feature type="compositionally biased region" description="Gly residues" evidence="2">
    <location>
        <begin position="11"/>
        <end position="29"/>
    </location>
</feature>
<feature type="compositionally biased region" description="Polar residues" evidence="2">
    <location>
        <begin position="290"/>
        <end position="300"/>
    </location>
</feature>
<feature type="sequence conflict" description="In Ref. 2; AAH29708/AAH24476." evidence="3" ref="2">
    <original>N</original>
    <variation>Y</variation>
    <location>
        <position position="277"/>
    </location>
</feature>
<dbReference type="EMBL" id="AL593853">
    <property type="status" value="NOT_ANNOTATED_CDS"/>
    <property type="molecule type" value="Genomic_DNA"/>
</dbReference>
<dbReference type="EMBL" id="BC024476">
    <property type="protein sequence ID" value="AAH24476.1"/>
    <property type="molecule type" value="mRNA"/>
</dbReference>
<dbReference type="EMBL" id="BC029708">
    <property type="protein sequence ID" value="AAH29708.1"/>
    <property type="molecule type" value="mRNA"/>
</dbReference>
<dbReference type="CCDS" id="CCDS25226.1"/>
<dbReference type="RefSeq" id="NP_932130.2">
    <property type="nucleotide sequence ID" value="NM_198013.3"/>
</dbReference>
<dbReference type="SMR" id="Q8R3V6"/>
<dbReference type="BioGRID" id="222179">
    <property type="interactions" value="1"/>
</dbReference>
<dbReference type="FunCoup" id="Q8R3V6">
    <property type="interactions" value="28"/>
</dbReference>
<dbReference type="STRING" id="10090.ENSMUSP00000018522"/>
<dbReference type="GlyGen" id="Q8R3V6">
    <property type="glycosylation" value="1 site"/>
</dbReference>
<dbReference type="iPTMnet" id="Q8R3V6"/>
<dbReference type="PhosphoSitePlus" id="Q8R3V6"/>
<dbReference type="PaxDb" id="10090-ENSMUSP00000018522"/>
<dbReference type="ProteomicsDB" id="285433"/>
<dbReference type="Pumba" id="Q8R3V6"/>
<dbReference type="Antibodypedia" id="18339">
    <property type="antibodies" value="102 antibodies from 25 providers"/>
</dbReference>
<dbReference type="Ensembl" id="ENSMUST00000018522.13">
    <property type="protein sequence ID" value="ENSMUSP00000018522.7"/>
    <property type="gene ID" value="ENSMUSG00000018378.14"/>
</dbReference>
<dbReference type="GeneID" id="103841"/>
<dbReference type="KEGG" id="mmu:103841"/>
<dbReference type="UCSC" id="uc007kvg.2">
    <property type="organism name" value="mouse"/>
</dbReference>
<dbReference type="AGR" id="MGI:2144281"/>
<dbReference type="CTD" id="404093"/>
<dbReference type="MGI" id="MGI:2144281">
    <property type="gene designation" value="Cuedc1"/>
</dbReference>
<dbReference type="VEuPathDB" id="HostDB:ENSMUSG00000018378"/>
<dbReference type="eggNOG" id="KOG4588">
    <property type="taxonomic scope" value="Eukaryota"/>
</dbReference>
<dbReference type="GeneTree" id="ENSGT00390000006762"/>
<dbReference type="HOGENOM" id="CLU_064865_0_0_1"/>
<dbReference type="InParanoid" id="Q8R3V6"/>
<dbReference type="OMA" id="TDFKTMF"/>
<dbReference type="OrthoDB" id="5794653at2759"/>
<dbReference type="PhylomeDB" id="Q8R3V6"/>
<dbReference type="TreeFam" id="TF324332"/>
<dbReference type="BioGRID-ORCS" id="103841">
    <property type="hits" value="4 hits in 79 CRISPR screens"/>
</dbReference>
<dbReference type="ChiTaRS" id="Cuedc1">
    <property type="organism name" value="mouse"/>
</dbReference>
<dbReference type="PRO" id="PR:Q8R3V6"/>
<dbReference type="Proteomes" id="UP000000589">
    <property type="component" value="Chromosome 11"/>
</dbReference>
<dbReference type="RNAct" id="Q8R3V6">
    <property type="molecule type" value="protein"/>
</dbReference>
<dbReference type="Bgee" id="ENSMUSG00000018378">
    <property type="expression patterns" value="Expressed in retinal neural layer and 66 other cell types or tissues"/>
</dbReference>
<dbReference type="ExpressionAtlas" id="Q8R3V6">
    <property type="expression patterns" value="baseline and differential"/>
</dbReference>
<dbReference type="GO" id="GO:0043130">
    <property type="term" value="F:ubiquitin binding"/>
    <property type="evidence" value="ECO:0007669"/>
    <property type="project" value="InterPro"/>
</dbReference>
<dbReference type="CDD" id="cd14366">
    <property type="entry name" value="CUE_CUED1"/>
    <property type="match status" value="1"/>
</dbReference>
<dbReference type="Gene3D" id="1.10.8.10">
    <property type="entry name" value="DNA helicase RuvA subunit, C-terminal domain"/>
    <property type="match status" value="1"/>
</dbReference>
<dbReference type="InterPro" id="IPR003892">
    <property type="entry name" value="CUE"/>
</dbReference>
<dbReference type="InterPro" id="IPR040195">
    <property type="entry name" value="CUE_CUED1"/>
</dbReference>
<dbReference type="InterPro" id="IPR040192">
    <property type="entry name" value="CUEDC1"/>
</dbReference>
<dbReference type="InterPro" id="IPR009060">
    <property type="entry name" value="UBA-like_sf"/>
</dbReference>
<dbReference type="PANTHER" id="PTHR13467">
    <property type="entry name" value="CUE DOMAIN CONTAINING PROTEIN 1"/>
    <property type="match status" value="1"/>
</dbReference>
<dbReference type="PANTHER" id="PTHR13467:SF3">
    <property type="entry name" value="CUE DOMAIN-CONTAINING PROTEIN 1"/>
    <property type="match status" value="1"/>
</dbReference>
<dbReference type="Pfam" id="PF02845">
    <property type="entry name" value="CUE"/>
    <property type="match status" value="1"/>
</dbReference>
<dbReference type="SMART" id="SM00546">
    <property type="entry name" value="CUE"/>
    <property type="match status" value="1"/>
</dbReference>
<dbReference type="SUPFAM" id="SSF46934">
    <property type="entry name" value="UBA-like"/>
    <property type="match status" value="1"/>
</dbReference>
<dbReference type="PROSITE" id="PS51140">
    <property type="entry name" value="CUE"/>
    <property type="match status" value="1"/>
</dbReference>
<proteinExistence type="evidence at transcript level"/>
<protein>
    <recommendedName>
        <fullName>CUE domain-containing protein 1</fullName>
    </recommendedName>
</protein>
<reference key="1">
    <citation type="journal article" date="2009" name="PLoS Biol.">
        <title>Lineage-specific biology revealed by a finished genome assembly of the mouse.</title>
        <authorList>
            <person name="Church D.M."/>
            <person name="Goodstadt L."/>
            <person name="Hillier L.W."/>
            <person name="Zody M.C."/>
            <person name="Goldstein S."/>
            <person name="She X."/>
            <person name="Bult C.J."/>
            <person name="Agarwala R."/>
            <person name="Cherry J.L."/>
            <person name="DiCuccio M."/>
            <person name="Hlavina W."/>
            <person name="Kapustin Y."/>
            <person name="Meric P."/>
            <person name="Maglott D."/>
            <person name="Birtle Z."/>
            <person name="Marques A.C."/>
            <person name="Graves T."/>
            <person name="Zhou S."/>
            <person name="Teague B."/>
            <person name="Potamousis K."/>
            <person name="Churas C."/>
            <person name="Place M."/>
            <person name="Herschleb J."/>
            <person name="Runnheim R."/>
            <person name="Forrest D."/>
            <person name="Amos-Landgraf J."/>
            <person name="Schwartz D.C."/>
            <person name="Cheng Z."/>
            <person name="Lindblad-Toh K."/>
            <person name="Eichler E.E."/>
            <person name="Ponting C.P."/>
        </authorList>
    </citation>
    <scope>NUCLEOTIDE SEQUENCE [LARGE SCALE GENOMIC DNA]</scope>
    <source>
        <strain>C57BL/6J</strain>
    </source>
</reference>
<reference key="2">
    <citation type="journal article" date="2004" name="Genome Res.">
        <title>The status, quality, and expansion of the NIH full-length cDNA project: the Mammalian Gene Collection (MGC).</title>
        <authorList>
            <consortium name="The MGC Project Team"/>
        </authorList>
    </citation>
    <scope>NUCLEOTIDE SEQUENCE [LARGE SCALE MRNA]</scope>
    <source>
        <tissue>Kidney</tissue>
    </source>
</reference>
<sequence>MTSLFRRSSSGSGGGGATGARGAGTGAGDGSTAPQELNNSRPARQVRRLEFNQAMDDFKTMFPNMDYDIIECVLRANSGAVDATIDQLLQMNLEAGGGSAYEDSSDSEDSIPPEILERTLEPDSSEEEPPPVYSPPAYHMHVFDRPYLMAPPTPPPRIDVPGSGQPASQRRYRNWNPPLLGSLPDDFLRILPQQMDSIQGHPGGSKPMSGEGGPPPAPGPMACDQDSRWKQYLEDERIALFLQNEEFMKELQRNRDFLLALERDRLKYESQKSKSNNAAVGNDGGFPSSVPGTSETNPTVSEDALFRDKLKHMGKSTRRKLFELARAFSEKTKMRKSKKKHLPKLQSLGAAASTANLLDDVEGHAYEEDFRGRRQEVPKVEEALREGQ</sequence>
<gene>
    <name type="primary">Cuedc1</name>
</gene>